<organism>
    <name type="scientific">Rhizobium johnstonii (strain DSM 114642 / LMG 32736 / 3841)</name>
    <name type="common">Rhizobium leguminosarum bv. viciae</name>
    <dbReference type="NCBI Taxonomy" id="216596"/>
    <lineage>
        <taxon>Bacteria</taxon>
        <taxon>Pseudomonadati</taxon>
        <taxon>Pseudomonadota</taxon>
        <taxon>Alphaproteobacteria</taxon>
        <taxon>Hyphomicrobiales</taxon>
        <taxon>Rhizobiaceae</taxon>
        <taxon>Rhizobium/Agrobacterium group</taxon>
        <taxon>Rhizobium</taxon>
        <taxon>Rhizobium johnstonii</taxon>
    </lineage>
</organism>
<dbReference type="EC" id="7.1.1.-" evidence="1"/>
<dbReference type="EMBL" id="AM236080">
    <property type="protein sequence ID" value="CAK07196.1"/>
    <property type="molecule type" value="Genomic_DNA"/>
</dbReference>
<dbReference type="RefSeq" id="WP_003547368.1">
    <property type="nucleotide sequence ID" value="NC_008380.1"/>
</dbReference>
<dbReference type="SMR" id="Q1MIL4"/>
<dbReference type="EnsemblBacteria" id="CAK07196">
    <property type="protein sequence ID" value="CAK07196"/>
    <property type="gene ID" value="RL1701"/>
</dbReference>
<dbReference type="KEGG" id="rle:RL1701"/>
<dbReference type="eggNOG" id="COG0377">
    <property type="taxonomic scope" value="Bacteria"/>
</dbReference>
<dbReference type="HOGENOM" id="CLU_055737_7_0_5"/>
<dbReference type="Proteomes" id="UP000006575">
    <property type="component" value="Chromosome"/>
</dbReference>
<dbReference type="GO" id="GO:0005886">
    <property type="term" value="C:plasma membrane"/>
    <property type="evidence" value="ECO:0007669"/>
    <property type="project" value="UniProtKB-SubCell"/>
</dbReference>
<dbReference type="GO" id="GO:0045271">
    <property type="term" value="C:respiratory chain complex I"/>
    <property type="evidence" value="ECO:0007669"/>
    <property type="project" value="TreeGrafter"/>
</dbReference>
<dbReference type="GO" id="GO:0051539">
    <property type="term" value="F:4 iron, 4 sulfur cluster binding"/>
    <property type="evidence" value="ECO:0007669"/>
    <property type="project" value="UniProtKB-KW"/>
</dbReference>
<dbReference type="GO" id="GO:0005506">
    <property type="term" value="F:iron ion binding"/>
    <property type="evidence" value="ECO:0007669"/>
    <property type="project" value="UniProtKB-UniRule"/>
</dbReference>
<dbReference type="GO" id="GO:0008137">
    <property type="term" value="F:NADH dehydrogenase (ubiquinone) activity"/>
    <property type="evidence" value="ECO:0007669"/>
    <property type="project" value="InterPro"/>
</dbReference>
<dbReference type="GO" id="GO:0050136">
    <property type="term" value="F:NADH:ubiquinone reductase (non-electrogenic) activity"/>
    <property type="evidence" value="ECO:0007669"/>
    <property type="project" value="UniProtKB-UniRule"/>
</dbReference>
<dbReference type="GO" id="GO:0048038">
    <property type="term" value="F:quinone binding"/>
    <property type="evidence" value="ECO:0007669"/>
    <property type="project" value="UniProtKB-KW"/>
</dbReference>
<dbReference type="GO" id="GO:0009060">
    <property type="term" value="P:aerobic respiration"/>
    <property type="evidence" value="ECO:0007669"/>
    <property type="project" value="TreeGrafter"/>
</dbReference>
<dbReference type="GO" id="GO:0015990">
    <property type="term" value="P:electron transport coupled proton transport"/>
    <property type="evidence" value="ECO:0007669"/>
    <property type="project" value="TreeGrafter"/>
</dbReference>
<dbReference type="FunFam" id="3.40.50.12280:FF:000001">
    <property type="entry name" value="NADH-quinone oxidoreductase subunit B 2"/>
    <property type="match status" value="1"/>
</dbReference>
<dbReference type="Gene3D" id="3.40.50.12280">
    <property type="match status" value="1"/>
</dbReference>
<dbReference type="HAMAP" id="MF_01356">
    <property type="entry name" value="NDH1_NuoB"/>
    <property type="match status" value="1"/>
</dbReference>
<dbReference type="InterPro" id="IPR006137">
    <property type="entry name" value="NADH_UbQ_OxRdtase-like_20kDa"/>
</dbReference>
<dbReference type="InterPro" id="IPR006138">
    <property type="entry name" value="NADH_UQ_OxRdtase_20Kd_su"/>
</dbReference>
<dbReference type="NCBIfam" id="TIGR01957">
    <property type="entry name" value="nuoB_fam"/>
    <property type="match status" value="1"/>
</dbReference>
<dbReference type="NCBIfam" id="NF005012">
    <property type="entry name" value="PRK06411.1"/>
    <property type="match status" value="1"/>
</dbReference>
<dbReference type="PANTHER" id="PTHR11995">
    <property type="entry name" value="NADH DEHYDROGENASE"/>
    <property type="match status" value="1"/>
</dbReference>
<dbReference type="PANTHER" id="PTHR11995:SF14">
    <property type="entry name" value="NADH DEHYDROGENASE [UBIQUINONE] IRON-SULFUR PROTEIN 7, MITOCHONDRIAL"/>
    <property type="match status" value="1"/>
</dbReference>
<dbReference type="Pfam" id="PF01058">
    <property type="entry name" value="Oxidored_q6"/>
    <property type="match status" value="1"/>
</dbReference>
<dbReference type="SUPFAM" id="SSF56770">
    <property type="entry name" value="HydA/Nqo6-like"/>
    <property type="match status" value="1"/>
</dbReference>
<dbReference type="PROSITE" id="PS01150">
    <property type="entry name" value="COMPLEX1_20K"/>
    <property type="match status" value="1"/>
</dbReference>
<accession>Q1MIL4</accession>
<feature type="chain" id="PRO_0000376330" description="NADH-quinone oxidoreductase subunit B">
    <location>
        <begin position="1"/>
        <end position="194"/>
    </location>
</feature>
<feature type="binding site" evidence="1">
    <location>
        <position position="73"/>
    </location>
    <ligand>
        <name>[4Fe-4S] cluster</name>
        <dbReference type="ChEBI" id="CHEBI:49883"/>
    </ligand>
</feature>
<feature type="binding site" evidence="1">
    <location>
        <position position="74"/>
    </location>
    <ligand>
        <name>[4Fe-4S] cluster</name>
        <dbReference type="ChEBI" id="CHEBI:49883"/>
    </ligand>
</feature>
<feature type="binding site" evidence="1">
    <location>
        <position position="138"/>
    </location>
    <ligand>
        <name>[4Fe-4S] cluster</name>
        <dbReference type="ChEBI" id="CHEBI:49883"/>
    </ligand>
</feature>
<feature type="binding site" evidence="1">
    <location>
        <position position="168"/>
    </location>
    <ligand>
        <name>[4Fe-4S] cluster</name>
        <dbReference type="ChEBI" id="CHEBI:49883"/>
    </ligand>
</feature>
<evidence type="ECO:0000255" key="1">
    <source>
        <dbReference type="HAMAP-Rule" id="MF_01356"/>
    </source>
</evidence>
<reference key="1">
    <citation type="journal article" date="2006" name="Genome Biol.">
        <title>The genome of Rhizobium leguminosarum has recognizable core and accessory components.</title>
        <authorList>
            <person name="Young J.P.W."/>
            <person name="Crossman L.C."/>
            <person name="Johnston A.W.B."/>
            <person name="Thomson N.R."/>
            <person name="Ghazoui Z.F."/>
            <person name="Hull K.H."/>
            <person name="Wexler M."/>
            <person name="Curson A.R.J."/>
            <person name="Todd J.D."/>
            <person name="Poole P.S."/>
            <person name="Mauchline T.H."/>
            <person name="East A.K."/>
            <person name="Quail M.A."/>
            <person name="Churcher C."/>
            <person name="Arrowsmith C."/>
            <person name="Cherevach I."/>
            <person name="Chillingworth T."/>
            <person name="Clarke K."/>
            <person name="Cronin A."/>
            <person name="Davis P."/>
            <person name="Fraser A."/>
            <person name="Hance Z."/>
            <person name="Hauser H."/>
            <person name="Jagels K."/>
            <person name="Moule S."/>
            <person name="Mungall K."/>
            <person name="Norbertczak H."/>
            <person name="Rabbinowitsch E."/>
            <person name="Sanders M."/>
            <person name="Simmonds M."/>
            <person name="Whitehead S."/>
            <person name="Parkhill J."/>
        </authorList>
    </citation>
    <scope>NUCLEOTIDE SEQUENCE [LARGE SCALE GENOMIC DNA]</scope>
    <source>
        <strain>DSM 114642 / LMG 32736 / 3841</strain>
    </source>
</reference>
<comment type="function">
    <text evidence="1">NDH-1 shuttles electrons from NADH, via FMN and iron-sulfur (Fe-S) centers, to quinones in the respiratory chain. The immediate electron acceptor for the enzyme in this species is believed to be ubiquinone. Couples the redox reaction to proton translocation (for every two electrons transferred, four hydrogen ions are translocated across the cytoplasmic membrane), and thus conserves the redox energy in a proton gradient.</text>
</comment>
<comment type="catalytic activity">
    <reaction evidence="1">
        <text>a quinone + NADH + 5 H(+)(in) = a quinol + NAD(+) + 4 H(+)(out)</text>
        <dbReference type="Rhea" id="RHEA:57888"/>
        <dbReference type="ChEBI" id="CHEBI:15378"/>
        <dbReference type="ChEBI" id="CHEBI:24646"/>
        <dbReference type="ChEBI" id="CHEBI:57540"/>
        <dbReference type="ChEBI" id="CHEBI:57945"/>
        <dbReference type="ChEBI" id="CHEBI:132124"/>
    </reaction>
</comment>
<comment type="cofactor">
    <cofactor evidence="1">
        <name>[4Fe-4S] cluster</name>
        <dbReference type="ChEBI" id="CHEBI:49883"/>
    </cofactor>
    <text evidence="1">Binds 1 [4Fe-4S] cluster.</text>
</comment>
<comment type="subunit">
    <text evidence="1">NDH-1 is composed of 14 different subunits. Subunits NuoB, C, D, E, F, and G constitute the peripheral sector of the complex.</text>
</comment>
<comment type="subcellular location">
    <subcellularLocation>
        <location evidence="1">Cell inner membrane</location>
        <topology evidence="1">Peripheral membrane protein</topology>
        <orientation evidence="1">Cytoplasmic side</orientation>
    </subcellularLocation>
</comment>
<comment type="similarity">
    <text evidence="1">Belongs to the complex I 20 kDa subunit family.</text>
</comment>
<gene>
    <name evidence="1" type="primary">nuoB</name>
    <name type="ordered locus">RL1701</name>
</gene>
<sequence>MGVAPVSNQPLVAQQPKGIIDPSTGKPIGSNDPFFGEINNELADKGFLVTSTDELINWARTGSLMWMTFGLACCAVEMMQLSMPRYDVERFGFAPRASPRQSDVMIVAGTLTNKMAPALRKVYDQMPEPRYVISMGSCANGGGYYHYSYSVVRGCDRIVPIDIYVPGCPPTAEALLYGVLLLQKKIRRTGTIER</sequence>
<proteinExistence type="inferred from homology"/>
<keyword id="KW-0004">4Fe-4S</keyword>
<keyword id="KW-0997">Cell inner membrane</keyword>
<keyword id="KW-1003">Cell membrane</keyword>
<keyword id="KW-0408">Iron</keyword>
<keyword id="KW-0411">Iron-sulfur</keyword>
<keyword id="KW-0472">Membrane</keyword>
<keyword id="KW-0479">Metal-binding</keyword>
<keyword id="KW-0520">NAD</keyword>
<keyword id="KW-0874">Quinone</keyword>
<keyword id="KW-1278">Translocase</keyword>
<keyword id="KW-0813">Transport</keyword>
<keyword id="KW-0830">Ubiquinone</keyword>
<name>NUOB_RHIJ3</name>
<protein>
    <recommendedName>
        <fullName evidence="1">NADH-quinone oxidoreductase subunit B</fullName>
        <ecNumber evidence="1">7.1.1.-</ecNumber>
    </recommendedName>
    <alternativeName>
        <fullName evidence="1">NADH dehydrogenase I subunit B</fullName>
    </alternativeName>
    <alternativeName>
        <fullName evidence="1">NDH-1 subunit B</fullName>
    </alternativeName>
</protein>